<proteinExistence type="evidence at protein level"/>
<reference key="1">
    <citation type="journal article" date="2004" name="Science">
        <title>The 1.2-megabase genome sequence of Mimivirus.</title>
        <authorList>
            <person name="Raoult D."/>
            <person name="Audic S."/>
            <person name="Robert C."/>
            <person name="Abergel C."/>
            <person name="Renesto P."/>
            <person name="Ogata H."/>
            <person name="La Scola B."/>
            <person name="Susan M."/>
            <person name="Claverie J.-M."/>
        </authorList>
    </citation>
    <scope>NUCLEOTIDE SEQUENCE [LARGE SCALE GENOMIC DNA]</scope>
    <source>
        <strain>Rowbotham-Bradford</strain>
    </source>
</reference>
<reference key="2">
    <citation type="journal article" date="2006" name="J. Virol.">
        <title>Mimivirus giant particles incorporate a large fraction of anonymous and unique gene products.</title>
        <authorList>
            <person name="Renesto P."/>
            <person name="Abergel C."/>
            <person name="Decloquement P."/>
            <person name="Moinier D."/>
            <person name="Azza S."/>
            <person name="Ogata H."/>
            <person name="Fourquet P."/>
            <person name="Gorvel J.-P."/>
            <person name="Claverie J.-M."/>
            <person name="Raoult D."/>
        </authorList>
    </citation>
    <scope>IDENTIFICATION BY MASS SPECTROMETRY [LARGE SCALE ANALYSIS]</scope>
    <scope>SUBCELLULAR LOCATION</scope>
</reference>
<comment type="subcellular location">
    <subcellularLocation>
        <location evidence="3">Host membrane</location>
        <topology evidence="3">Single-pass membrane protein</topology>
    </subcellularLocation>
    <subcellularLocation>
        <location evidence="2">Virion</location>
    </subcellularLocation>
</comment>
<dbReference type="EMBL" id="AY653733">
    <property type="protein sequence ID" value="AAV50821.1"/>
    <property type="molecule type" value="Genomic_DNA"/>
</dbReference>
<dbReference type="SMR" id="Q5UR31"/>
<dbReference type="KEGG" id="vg:9925192"/>
<dbReference type="OrthoDB" id="22460at10239"/>
<dbReference type="Proteomes" id="UP000001134">
    <property type="component" value="Genome"/>
</dbReference>
<dbReference type="GO" id="GO:0033644">
    <property type="term" value="C:host cell membrane"/>
    <property type="evidence" value="ECO:0007669"/>
    <property type="project" value="UniProtKB-SubCell"/>
</dbReference>
<dbReference type="GO" id="GO:0016020">
    <property type="term" value="C:membrane"/>
    <property type="evidence" value="ECO:0007669"/>
    <property type="project" value="UniProtKB-KW"/>
</dbReference>
<dbReference type="GO" id="GO:0044423">
    <property type="term" value="C:virion component"/>
    <property type="evidence" value="ECO:0007669"/>
    <property type="project" value="UniProtKB-KW"/>
</dbReference>
<gene>
    <name type="ordered locus">MIMI_R557</name>
</gene>
<accession>Q5UR31</accession>
<organism>
    <name type="scientific">Acanthamoeba polyphaga mimivirus</name>
    <name type="common">APMV</name>
    <dbReference type="NCBI Taxonomy" id="212035"/>
    <lineage>
        <taxon>Viruses</taxon>
        <taxon>Varidnaviria</taxon>
        <taxon>Bamfordvirae</taxon>
        <taxon>Nucleocytoviricota</taxon>
        <taxon>Megaviricetes</taxon>
        <taxon>Imitervirales</taxon>
        <taxon>Mimiviridae</taxon>
        <taxon>Megamimivirinae</taxon>
        <taxon>Mimivirus</taxon>
        <taxon>Mimivirus bradfordmassiliense</taxon>
    </lineage>
</organism>
<organismHost>
    <name type="scientific">Acanthamoeba polyphaga</name>
    <name type="common">Amoeba</name>
    <dbReference type="NCBI Taxonomy" id="5757"/>
</organismHost>
<sequence>MSQVTGFDQSNVAQYSSFDPLGSLEHAGSNLGNFIQRNNPFPSLSQSASHTFDDVRSDSGKIFDELKSEADKFYDDAKHGLSDIDYRDFYASDPGNTVLRASMQSPYLNSYMDINNAPNVIPLQAPPIVTNRNSKDYNILFVVVILLLLFVAWRCYVNKR</sequence>
<protein>
    <recommendedName>
        <fullName>Uncharacterized protein R557</fullName>
    </recommendedName>
</protein>
<name>YR557_MIMIV</name>
<evidence type="ECO:0000255" key="1"/>
<evidence type="ECO:0000269" key="2">
    <source>
    </source>
</evidence>
<evidence type="ECO:0000305" key="3"/>
<feature type="chain" id="PRO_0000243971" description="Uncharacterized protein R557">
    <location>
        <begin position="1"/>
        <end position="160"/>
    </location>
</feature>
<feature type="transmembrane region" description="Helical" evidence="1">
    <location>
        <begin position="137"/>
        <end position="157"/>
    </location>
</feature>
<keyword id="KW-1043">Host membrane</keyword>
<keyword id="KW-0472">Membrane</keyword>
<keyword id="KW-1185">Reference proteome</keyword>
<keyword id="KW-0812">Transmembrane</keyword>
<keyword id="KW-1133">Transmembrane helix</keyword>
<keyword id="KW-0946">Virion</keyword>